<keyword id="KW-0007">Acetylation</keyword>
<keyword id="KW-0148">Chlorophyll</keyword>
<keyword id="KW-0150">Chloroplast</keyword>
<keyword id="KW-0157">Chromophore</keyword>
<keyword id="KW-0249">Electron transport</keyword>
<keyword id="KW-0408">Iron</keyword>
<keyword id="KW-0460">Magnesium</keyword>
<keyword id="KW-0472">Membrane</keyword>
<keyword id="KW-0479">Metal-binding</keyword>
<keyword id="KW-0560">Oxidoreductase</keyword>
<keyword id="KW-0597">Phosphoprotein</keyword>
<keyword id="KW-0602">Photosynthesis</keyword>
<keyword id="KW-0604">Photosystem II</keyword>
<keyword id="KW-0934">Plastid</keyword>
<keyword id="KW-1185">Reference proteome</keyword>
<keyword id="KW-0793">Thylakoid</keyword>
<keyword id="KW-0812">Transmembrane</keyword>
<keyword id="KW-1133">Transmembrane helix</keyword>
<keyword id="KW-0813">Transport</keyword>
<proteinExistence type="inferred from homology"/>
<accession>Q6YXN8</accession>
<protein>
    <recommendedName>
        <fullName evidence="2">Photosystem II D2 protein</fullName>
        <shortName evidence="2">PSII D2 protein</shortName>
        <ecNumber evidence="2">1.10.3.9</ecNumber>
    </recommendedName>
    <alternativeName>
        <fullName evidence="2">Photosystem Q(A) protein</fullName>
    </alternativeName>
</protein>
<name>PSBD_PHYPA</name>
<comment type="function">
    <text evidence="2">Photosystem II (PSII) is a light-driven water:plastoquinone oxidoreductase that uses light energy to abstract electrons from H(2)O, generating O(2) and a proton gradient subsequently used for ATP formation. It consists of a core antenna complex that captures photons, and an electron transfer chain that converts photonic excitation into a charge separation. The D1/D2 (PsbA/PsbD) reaction center heterodimer binds P680, the primary electron donor of PSII as well as several subsequent electron acceptors. D2 is needed for assembly of a stable PSII complex.</text>
</comment>
<comment type="catalytic activity">
    <reaction evidence="2">
        <text>2 a plastoquinone + 4 hnu + 2 H2O = 2 a plastoquinol + O2</text>
        <dbReference type="Rhea" id="RHEA:36359"/>
        <dbReference type="Rhea" id="RHEA-COMP:9561"/>
        <dbReference type="Rhea" id="RHEA-COMP:9562"/>
        <dbReference type="ChEBI" id="CHEBI:15377"/>
        <dbReference type="ChEBI" id="CHEBI:15379"/>
        <dbReference type="ChEBI" id="CHEBI:17757"/>
        <dbReference type="ChEBI" id="CHEBI:30212"/>
        <dbReference type="ChEBI" id="CHEBI:62192"/>
        <dbReference type="EC" id="1.10.3.9"/>
    </reaction>
</comment>
<comment type="cofactor">
    <text evidence="2">The D1/D2 heterodimer binds P680, chlorophylls that are the primary electron donor of PSII, and subsequent electron acceptors. It shares a non-heme iron and each subunit binds pheophytin, quinone, additional chlorophylls, carotenoids and lipids. There is also a Cl(-1) ion associated with D1 and D2, which is required for oxygen evolution. The PSII complex binds additional chlorophylls, carotenoids and specific lipids.</text>
</comment>
<comment type="subunit">
    <text evidence="2">PSII is composed of 1 copy each of membrane proteins PsbA, PsbB, PsbC, PsbD, PsbE, PsbF, PsbH, PsbI, PsbJ, PsbK, PsbL, PsbM, PsbT, PsbX, PsbY, PsbZ, Psb30/Ycf12, at least 3 peripheral proteins of the oxygen-evolving complex and a large number of cofactors. It forms dimeric complexes.</text>
</comment>
<comment type="subcellular location">
    <subcellularLocation>
        <location evidence="2">Plastid</location>
        <location evidence="2">Chloroplast thylakoid membrane</location>
        <topology evidence="2">Multi-pass membrane protein</topology>
    </subcellularLocation>
</comment>
<comment type="miscellaneous">
    <text evidence="2">2 of the reaction center chlorophylls (ChlD1 and ChlD2) are entirely coordinated by water.</text>
</comment>
<comment type="similarity">
    <text evidence="2">Belongs to the reaction center PufL/M/PsbA/D family.</text>
</comment>
<sequence>MTIAIGKSSKEPKGLFDSMDDWLRRDRFVFVGWSGLLLFPCAYFSLGGWFTGTTFVTSWYTHGLASSYLEGCNFLTAAVSTPANSLAHSLLLLWGPEAQGDFTRWCQLGGLWTFVALHGAFALIGFMLRQFELARSVQLRPYNAIAFSGPIAVFVSVFLIYPLGQSGWFFAPSFGVAAIFRFILFFQGFHNWTLNPFHMMGVAGVLGAALLCAIHGATVENTLFEDGDGANTFRAFNPTQSEETYSMVTANRFWSQIFGVAFSNKRWLHFFMLFVPVTGLWMSAIGVVGLALNLRAYDFVSQEIRAAEDPEFETFYTKNILLNEGIRAWMAAQDQPHENLVFPEEVLPRGNAL</sequence>
<reference key="1">
    <citation type="journal article" date="2003" name="Nucleic Acids Res.">
        <title>Complete chloroplast DNA sequence of the moss Physcomitrella patens: evidence for the loss and relocation of rpoA from the chloroplast to the nucleus.</title>
        <authorList>
            <person name="Sugiura C."/>
            <person name="Kobayashi Y."/>
            <person name="Setsuyuki A."/>
            <person name="Sugita C."/>
            <person name="Sugita M."/>
        </authorList>
    </citation>
    <scope>NUCLEOTIDE SEQUENCE [LARGE SCALE GENOMIC DNA]</scope>
    <source>
        <strain>cv. Gransden 2004</strain>
    </source>
</reference>
<evidence type="ECO:0000250" key="1">
    <source>
        <dbReference type="UniProtKB" id="P56761"/>
    </source>
</evidence>
<evidence type="ECO:0000255" key="2">
    <source>
        <dbReference type="HAMAP-Rule" id="MF_01383"/>
    </source>
</evidence>
<organism>
    <name type="scientific">Physcomitrium patens</name>
    <name type="common">Spreading-leaved earth moss</name>
    <name type="synonym">Physcomitrella patens</name>
    <dbReference type="NCBI Taxonomy" id="3218"/>
    <lineage>
        <taxon>Eukaryota</taxon>
        <taxon>Viridiplantae</taxon>
        <taxon>Streptophyta</taxon>
        <taxon>Embryophyta</taxon>
        <taxon>Bryophyta</taxon>
        <taxon>Bryophytina</taxon>
        <taxon>Bryopsida</taxon>
        <taxon>Funariidae</taxon>
        <taxon>Funariales</taxon>
        <taxon>Funariaceae</taxon>
        <taxon>Physcomitrium</taxon>
    </lineage>
</organism>
<feature type="initiator methionine" description="Removed" evidence="1">
    <location>
        <position position="1"/>
    </location>
</feature>
<feature type="chain" id="PRO_0000359686" description="Photosystem II D2 protein">
    <location>
        <begin position="2"/>
        <end position="353"/>
    </location>
</feature>
<feature type="transmembrane region" description="Helical" evidence="2">
    <location>
        <begin position="41"/>
        <end position="61"/>
    </location>
</feature>
<feature type="transmembrane region" description="Helical" evidence="2">
    <location>
        <begin position="125"/>
        <end position="141"/>
    </location>
</feature>
<feature type="transmembrane region" description="Helical" evidence="2">
    <location>
        <begin position="153"/>
        <end position="166"/>
    </location>
</feature>
<feature type="transmembrane region" description="Helical" evidence="2">
    <location>
        <begin position="208"/>
        <end position="228"/>
    </location>
</feature>
<feature type="transmembrane region" description="Helical" evidence="2">
    <location>
        <begin position="279"/>
        <end position="295"/>
    </location>
</feature>
<feature type="binding site" description="axial binding residue" evidence="2">
    <location>
        <position position="118"/>
    </location>
    <ligand>
        <name>chlorophyll a</name>
        <dbReference type="ChEBI" id="CHEBI:58416"/>
        <label>ChlzD2</label>
    </ligand>
    <ligandPart>
        <name>Mg</name>
        <dbReference type="ChEBI" id="CHEBI:25107"/>
    </ligandPart>
</feature>
<feature type="binding site" evidence="2">
    <location>
        <position position="130"/>
    </location>
    <ligand>
        <name>pheophytin a</name>
        <dbReference type="ChEBI" id="CHEBI:136840"/>
        <label>D2</label>
    </ligand>
</feature>
<feature type="binding site" evidence="2">
    <location>
        <position position="143"/>
    </location>
    <ligand>
        <name>pheophytin a</name>
        <dbReference type="ChEBI" id="CHEBI:136840"/>
        <label>D2</label>
    </ligand>
</feature>
<feature type="binding site" description="axial binding residue" evidence="2">
    <location>
        <position position="198"/>
    </location>
    <ligand>
        <name>chlorophyll a</name>
        <dbReference type="ChEBI" id="CHEBI:58416"/>
        <label>PD2</label>
    </ligand>
    <ligandPart>
        <name>Mg</name>
        <dbReference type="ChEBI" id="CHEBI:25107"/>
    </ligandPart>
</feature>
<feature type="binding site" evidence="2">
    <location>
        <position position="215"/>
    </location>
    <ligand>
        <name>a plastoquinone</name>
        <dbReference type="ChEBI" id="CHEBI:17757"/>
        <label>Q(A)</label>
    </ligand>
</feature>
<feature type="binding site" evidence="2">
    <location>
        <position position="215"/>
    </location>
    <ligand>
        <name>Fe cation</name>
        <dbReference type="ChEBI" id="CHEBI:24875"/>
        <note>ligand shared with heterodimeric partner</note>
    </ligand>
</feature>
<feature type="binding site" evidence="2">
    <location>
        <position position="262"/>
    </location>
    <ligand>
        <name>a plastoquinone</name>
        <dbReference type="ChEBI" id="CHEBI:17757"/>
        <label>Q(A)</label>
    </ligand>
</feature>
<feature type="binding site" evidence="2">
    <location>
        <position position="269"/>
    </location>
    <ligand>
        <name>Fe cation</name>
        <dbReference type="ChEBI" id="CHEBI:24875"/>
        <note>ligand shared with heterodimeric partner</note>
    </ligand>
</feature>
<feature type="modified residue" description="N-acetylthreonine" evidence="1">
    <location>
        <position position="2"/>
    </location>
</feature>
<feature type="modified residue" description="Phosphothreonine" evidence="1">
    <location>
        <position position="2"/>
    </location>
</feature>
<gene>
    <name evidence="2" type="primary">psbD</name>
</gene>
<dbReference type="EC" id="1.10.3.9" evidence="2"/>
<dbReference type="EMBL" id="AP005672">
    <property type="protein sequence ID" value="BAC85057.1"/>
    <property type="molecule type" value="Genomic_DNA"/>
</dbReference>
<dbReference type="RefSeq" id="NP_904207.1">
    <property type="nucleotide sequence ID" value="NC_005087.2"/>
</dbReference>
<dbReference type="RefSeq" id="YP_009477537.1">
    <property type="nucleotide sequence ID" value="NC_037465.1"/>
</dbReference>
<dbReference type="SMR" id="Q6YXN8"/>
<dbReference type="FunCoup" id="Q6YXN8">
    <property type="interactions" value="535"/>
</dbReference>
<dbReference type="STRING" id="3218.Q6YXN8"/>
<dbReference type="GeneID" id="2546710"/>
<dbReference type="GeneID" id="36487161"/>
<dbReference type="KEGG" id="ppp:2546710"/>
<dbReference type="InParanoid" id="Q6YXN8"/>
<dbReference type="OrthoDB" id="34776at2759"/>
<dbReference type="Proteomes" id="UP000006727">
    <property type="component" value="Chloroplast"/>
</dbReference>
<dbReference type="GO" id="GO:0009535">
    <property type="term" value="C:chloroplast thylakoid membrane"/>
    <property type="evidence" value="ECO:0007669"/>
    <property type="project" value="UniProtKB-SubCell"/>
</dbReference>
<dbReference type="GO" id="GO:0009523">
    <property type="term" value="C:photosystem II"/>
    <property type="evidence" value="ECO:0000318"/>
    <property type="project" value="GO_Central"/>
</dbReference>
<dbReference type="GO" id="GO:0016168">
    <property type="term" value="F:chlorophyll binding"/>
    <property type="evidence" value="ECO:0007669"/>
    <property type="project" value="UniProtKB-UniRule"/>
</dbReference>
<dbReference type="GO" id="GO:0045156">
    <property type="term" value="F:electron transporter, transferring electrons within the cyclic electron transport pathway of photosynthesis activity"/>
    <property type="evidence" value="ECO:0007669"/>
    <property type="project" value="InterPro"/>
</dbReference>
<dbReference type="GO" id="GO:0005506">
    <property type="term" value="F:iron ion binding"/>
    <property type="evidence" value="ECO:0007669"/>
    <property type="project" value="UniProtKB-UniRule"/>
</dbReference>
<dbReference type="GO" id="GO:0010242">
    <property type="term" value="F:oxygen evolving activity"/>
    <property type="evidence" value="ECO:0007669"/>
    <property type="project" value="UniProtKB-EC"/>
</dbReference>
<dbReference type="GO" id="GO:0009772">
    <property type="term" value="P:photosynthetic electron transport in photosystem II"/>
    <property type="evidence" value="ECO:0007669"/>
    <property type="project" value="InterPro"/>
</dbReference>
<dbReference type="CDD" id="cd09288">
    <property type="entry name" value="Photosystem-II_D2"/>
    <property type="match status" value="1"/>
</dbReference>
<dbReference type="FunFam" id="1.20.85.10:FF:000001">
    <property type="entry name" value="photosystem II D2 protein-like"/>
    <property type="match status" value="1"/>
</dbReference>
<dbReference type="Gene3D" id="1.20.85.10">
    <property type="entry name" value="Photosystem II protein D1-like"/>
    <property type="match status" value="1"/>
</dbReference>
<dbReference type="HAMAP" id="MF_01383">
    <property type="entry name" value="PSII_PsbD_D2"/>
    <property type="match status" value="1"/>
</dbReference>
<dbReference type="InterPro" id="IPR055266">
    <property type="entry name" value="D1/D2"/>
</dbReference>
<dbReference type="InterPro" id="IPR036854">
    <property type="entry name" value="Photo_II_D1/D2_sf"/>
</dbReference>
<dbReference type="InterPro" id="IPR000484">
    <property type="entry name" value="Photo_RC_L/M"/>
</dbReference>
<dbReference type="InterPro" id="IPR055265">
    <property type="entry name" value="Photo_RC_L/M_CS"/>
</dbReference>
<dbReference type="InterPro" id="IPR005868">
    <property type="entry name" value="PSII_PsbD/D2"/>
</dbReference>
<dbReference type="NCBIfam" id="TIGR01152">
    <property type="entry name" value="psbD"/>
    <property type="match status" value="1"/>
</dbReference>
<dbReference type="PANTHER" id="PTHR33149:SF12">
    <property type="entry name" value="PHOTOSYSTEM II D2 PROTEIN"/>
    <property type="match status" value="1"/>
</dbReference>
<dbReference type="PANTHER" id="PTHR33149">
    <property type="entry name" value="PHOTOSYSTEM II PROTEIN D1"/>
    <property type="match status" value="1"/>
</dbReference>
<dbReference type="Pfam" id="PF00124">
    <property type="entry name" value="Photo_RC"/>
    <property type="match status" value="1"/>
</dbReference>
<dbReference type="PRINTS" id="PR00256">
    <property type="entry name" value="REACTNCENTRE"/>
</dbReference>
<dbReference type="SUPFAM" id="SSF81483">
    <property type="entry name" value="Bacterial photosystem II reaction centre, L and M subunits"/>
    <property type="match status" value="1"/>
</dbReference>
<dbReference type="PROSITE" id="PS00244">
    <property type="entry name" value="REACTION_CENTER"/>
    <property type="match status" value="1"/>
</dbReference>
<geneLocation type="chloroplast"/>